<gene>
    <name evidence="4" type="primary">RGL1</name>
    <name type="ordered locus">YPL066W</name>
    <name type="ORF">LPE4W</name>
</gene>
<name>RGL1_YEAST</name>
<comment type="function">
    <text evidence="3 5">Regulator of RHO1 signaling that acts as a cofactor required for the efficient localization of the TUS1 GTP exchange factor (GEF) for RHO1 to the bud neck during all phases of cytokinesis (PubMed:22344253). RHO1 is a key, essential hub protein in the cell wall integrity (CWI) pathway in which activated RHO1-GTP binds directly to and activates multiple different downstream effectors required for cell wall synthesis and actin assembly during cytokinesis (Probable).</text>
</comment>
<comment type="disruption phenotype">
    <text evidence="3">Impairs the efficient localization of TUS1 to the bud neck at late anaphase.</text>
</comment>
<comment type="miscellaneous">
    <text evidence="2">Present with 396 molecules/cell in log phase SD medium.</text>
</comment>
<evidence type="ECO:0000256" key="1">
    <source>
        <dbReference type="SAM" id="MobiDB-lite"/>
    </source>
</evidence>
<evidence type="ECO:0000269" key="2">
    <source>
    </source>
</evidence>
<evidence type="ECO:0000269" key="3">
    <source>
    </source>
</evidence>
<evidence type="ECO:0000303" key="4">
    <source>
    </source>
</evidence>
<evidence type="ECO:0000305" key="5">
    <source>
    </source>
</evidence>
<accession>Q12194</accession>
<accession>D6W3U9</accession>
<organism>
    <name type="scientific">Saccharomyces cerevisiae (strain ATCC 204508 / S288c)</name>
    <name type="common">Baker's yeast</name>
    <dbReference type="NCBI Taxonomy" id="559292"/>
    <lineage>
        <taxon>Eukaryota</taxon>
        <taxon>Fungi</taxon>
        <taxon>Dikarya</taxon>
        <taxon>Ascomycota</taxon>
        <taxon>Saccharomycotina</taxon>
        <taxon>Saccharomycetes</taxon>
        <taxon>Saccharomycetales</taxon>
        <taxon>Saccharomycetaceae</taxon>
        <taxon>Saccharomyces</taxon>
    </lineage>
</organism>
<feature type="chain" id="PRO_0000203492" description="RHO1 GEF localizing protein 1">
    <location>
        <begin position="1"/>
        <end position="479"/>
    </location>
</feature>
<feature type="region of interest" description="Disordered" evidence="1">
    <location>
        <begin position="460"/>
        <end position="479"/>
    </location>
</feature>
<proteinExistence type="evidence at protein level"/>
<reference key="1">
    <citation type="journal article" date="1997" name="Nature">
        <title>The nucleotide sequence of Saccharomyces cerevisiae chromosome XVI.</title>
        <authorList>
            <person name="Bussey H."/>
            <person name="Storms R.K."/>
            <person name="Ahmed A."/>
            <person name="Albermann K."/>
            <person name="Allen E."/>
            <person name="Ansorge W."/>
            <person name="Araujo R."/>
            <person name="Aparicio A."/>
            <person name="Barrell B.G."/>
            <person name="Badcock K."/>
            <person name="Benes V."/>
            <person name="Botstein D."/>
            <person name="Bowman S."/>
            <person name="Brueckner M."/>
            <person name="Carpenter J."/>
            <person name="Cherry J.M."/>
            <person name="Chung E."/>
            <person name="Churcher C.M."/>
            <person name="Coster F."/>
            <person name="Davis K."/>
            <person name="Davis R.W."/>
            <person name="Dietrich F.S."/>
            <person name="Delius H."/>
            <person name="DiPaolo T."/>
            <person name="Dubois E."/>
            <person name="Duesterhoeft A."/>
            <person name="Duncan M."/>
            <person name="Floeth M."/>
            <person name="Fortin N."/>
            <person name="Friesen J.D."/>
            <person name="Fritz C."/>
            <person name="Goffeau A."/>
            <person name="Hall J."/>
            <person name="Hebling U."/>
            <person name="Heumann K."/>
            <person name="Hilbert H."/>
            <person name="Hillier L.W."/>
            <person name="Hunicke-Smith S."/>
            <person name="Hyman R.W."/>
            <person name="Johnston M."/>
            <person name="Kalman S."/>
            <person name="Kleine K."/>
            <person name="Komp C."/>
            <person name="Kurdi O."/>
            <person name="Lashkari D."/>
            <person name="Lew H."/>
            <person name="Lin A."/>
            <person name="Lin D."/>
            <person name="Louis E.J."/>
            <person name="Marathe R."/>
            <person name="Messenguy F."/>
            <person name="Mewes H.-W."/>
            <person name="Mirtipati S."/>
            <person name="Moestl D."/>
            <person name="Mueller-Auer S."/>
            <person name="Namath A."/>
            <person name="Nentwich U."/>
            <person name="Oefner P."/>
            <person name="Pearson D."/>
            <person name="Petel F.X."/>
            <person name="Pohl T.M."/>
            <person name="Purnelle B."/>
            <person name="Rajandream M.A."/>
            <person name="Rechmann S."/>
            <person name="Rieger M."/>
            <person name="Riles L."/>
            <person name="Roberts D."/>
            <person name="Schaefer M."/>
            <person name="Scharfe M."/>
            <person name="Scherens B."/>
            <person name="Schramm S."/>
            <person name="Schroeder M."/>
            <person name="Sdicu A.-M."/>
            <person name="Tettelin H."/>
            <person name="Urrestarazu L.A."/>
            <person name="Ushinsky S."/>
            <person name="Vierendeels F."/>
            <person name="Vissers S."/>
            <person name="Voss H."/>
            <person name="Walsh S.V."/>
            <person name="Wambutt R."/>
            <person name="Wang Y."/>
            <person name="Wedler E."/>
            <person name="Wedler H."/>
            <person name="Winnett E."/>
            <person name="Zhong W.-W."/>
            <person name="Zollner A."/>
            <person name="Vo D.H."/>
            <person name="Hani J."/>
        </authorList>
    </citation>
    <scope>NUCLEOTIDE SEQUENCE [LARGE SCALE GENOMIC DNA]</scope>
    <source>
        <strain>ATCC 204508 / S288c</strain>
    </source>
</reference>
<reference key="2">
    <citation type="journal article" date="2014" name="G3 (Bethesda)">
        <title>The reference genome sequence of Saccharomyces cerevisiae: Then and now.</title>
        <authorList>
            <person name="Engel S.R."/>
            <person name="Dietrich F.S."/>
            <person name="Fisk D.G."/>
            <person name="Binkley G."/>
            <person name="Balakrishnan R."/>
            <person name="Costanzo M.C."/>
            <person name="Dwight S.S."/>
            <person name="Hitz B.C."/>
            <person name="Karra K."/>
            <person name="Nash R.S."/>
            <person name="Weng S."/>
            <person name="Wong E.D."/>
            <person name="Lloyd P."/>
            <person name="Skrzypek M.S."/>
            <person name="Miyasato S.R."/>
            <person name="Simison M."/>
            <person name="Cherry J.M."/>
        </authorList>
    </citation>
    <scope>GENOME REANNOTATION</scope>
    <source>
        <strain>ATCC 204508 / S288c</strain>
    </source>
</reference>
<reference key="3">
    <citation type="journal article" date="2003" name="Nature">
        <title>Global analysis of protein expression in yeast.</title>
        <authorList>
            <person name="Ghaemmaghami S."/>
            <person name="Huh W.-K."/>
            <person name="Bower K."/>
            <person name="Howson R.W."/>
            <person name="Belle A."/>
            <person name="Dephoure N."/>
            <person name="O'Shea E.K."/>
            <person name="Weissman J.S."/>
        </authorList>
    </citation>
    <scope>LEVEL OF PROTEIN EXPRESSION [LARGE SCALE ANALYSIS]</scope>
</reference>
<reference key="4">
    <citation type="journal article" date="2012" name="J. Cell Sci.">
        <title>Functional specialisation of yeast Rho1 GTP exchange factors.</title>
        <authorList>
            <person name="Krause S.A."/>
            <person name="Cundell M.J."/>
            <person name="Poon P.P."/>
            <person name="McGhie J."/>
            <person name="Johnston G.C."/>
            <person name="Price C."/>
            <person name="Gray J.V."/>
        </authorList>
    </citation>
    <scope>FUNCTION</scope>
    <scope>DISRUPTION PHENOTYPE</scope>
</reference>
<protein>
    <recommendedName>
        <fullName evidence="4">RHO1 GEF localizing protein 1</fullName>
    </recommendedName>
</protein>
<sequence length="479" mass="54893">MTHPVISLKPSYNSVIRGCPGLPDTLPRIECQLRVRSNNSLPFKLVKIEIVLKTIEIYFNKNLYSSNNSSFTPFNRPSDPSNGHSDTSNQNISIHYKKNIVLSHPTHDGDDLNNDLIGIDIPLTIGLPDDIKETNYNPKFGKTQTFLDCTVFYTEVGGGSSNKKRNFLYPVNVERYTYLPSPSYFRPINRSNITSPDQKFLISYSIENPCVSMNNDTLKLSISIRLNPFPNNATTPSSNDFDVSTPTLFSTKKKFKSKLKLKSITTQILEYLEILKNQSEFSSTQTTNILQTSVRQVDQIISMNSMIFQFNLKIFTKDKILQSFRSSESSCPETKVLINKIDDIPLQYHSSITTIGQHFNVSHYLSIRFKFNKSLKNFEINHPLIISFWSVSQLPLIENLILQERQTAKFAKKFYKNFGRIKNTSNNNNSSNCLEYPSLPPIIYNFNDPETNNRFNILYSQKDPSRTDPSKLRRVPVIQ</sequence>
<dbReference type="EMBL" id="U50630">
    <property type="status" value="NOT_ANNOTATED_CDS"/>
    <property type="molecule type" value="Genomic_DNA"/>
</dbReference>
<dbReference type="EMBL" id="U39205">
    <property type="protein sequence ID" value="AAB68299.1"/>
    <property type="molecule type" value="Genomic_DNA"/>
</dbReference>
<dbReference type="EMBL" id="BK006949">
    <property type="protein sequence ID" value="DAA11365.1"/>
    <property type="molecule type" value="Genomic_DNA"/>
</dbReference>
<dbReference type="PIR" id="S60924">
    <property type="entry name" value="S60924"/>
</dbReference>
<dbReference type="RefSeq" id="NP_015259.1">
    <property type="nucleotide sequence ID" value="NM_001183880.1"/>
</dbReference>
<dbReference type="BioGRID" id="36113">
    <property type="interactions" value="205"/>
</dbReference>
<dbReference type="DIP" id="DIP-2817N"/>
<dbReference type="FunCoup" id="Q12194">
    <property type="interactions" value="104"/>
</dbReference>
<dbReference type="IntAct" id="Q12194">
    <property type="interactions" value="5"/>
</dbReference>
<dbReference type="MINT" id="Q12194"/>
<dbReference type="STRING" id="4932.YPL066W"/>
<dbReference type="iPTMnet" id="Q12194"/>
<dbReference type="PaxDb" id="4932-YPL066W"/>
<dbReference type="PeptideAtlas" id="Q12194"/>
<dbReference type="EnsemblFungi" id="YPL066W_mRNA">
    <property type="protein sequence ID" value="YPL066W"/>
    <property type="gene ID" value="YPL066W"/>
</dbReference>
<dbReference type="GeneID" id="856039"/>
<dbReference type="KEGG" id="sce:YPL066W"/>
<dbReference type="AGR" id="SGD:S000005987"/>
<dbReference type="SGD" id="S000005987">
    <property type="gene designation" value="RGL1"/>
</dbReference>
<dbReference type="VEuPathDB" id="FungiDB:YPL066W"/>
<dbReference type="eggNOG" id="ENOG502QSRB">
    <property type="taxonomic scope" value="Eukaryota"/>
</dbReference>
<dbReference type="HOGENOM" id="CLU_598506_0_0_1"/>
<dbReference type="InParanoid" id="Q12194"/>
<dbReference type="OMA" id="PRIECQL"/>
<dbReference type="OrthoDB" id="4001642at2759"/>
<dbReference type="BioCyc" id="YEAST:G3O-33975-MONOMER"/>
<dbReference type="BioGRID-ORCS" id="856039">
    <property type="hits" value="0 hits in 10 CRISPR screens"/>
</dbReference>
<dbReference type="PRO" id="PR:Q12194"/>
<dbReference type="Proteomes" id="UP000002311">
    <property type="component" value="Chromosome XVI"/>
</dbReference>
<dbReference type="RNAct" id="Q12194">
    <property type="molecule type" value="protein"/>
</dbReference>
<dbReference type="GO" id="GO:0005935">
    <property type="term" value="C:cellular bud neck"/>
    <property type="evidence" value="ECO:0007005"/>
    <property type="project" value="SGD"/>
</dbReference>
<dbReference type="GO" id="GO:0005737">
    <property type="term" value="C:cytoplasm"/>
    <property type="evidence" value="ECO:0007005"/>
    <property type="project" value="SGD"/>
</dbReference>
<dbReference type="GO" id="GO:0000935">
    <property type="term" value="C:division septum"/>
    <property type="evidence" value="ECO:0000318"/>
    <property type="project" value="GO_Central"/>
</dbReference>
<dbReference type="GO" id="GO:0000917">
    <property type="term" value="P:division septum assembly"/>
    <property type="evidence" value="ECO:0000318"/>
    <property type="project" value="GO_Central"/>
</dbReference>
<dbReference type="GO" id="GO:0097271">
    <property type="term" value="P:protein localization to bud neck"/>
    <property type="evidence" value="ECO:0000315"/>
    <property type="project" value="SGD"/>
</dbReference>
<dbReference type="InterPro" id="IPR053060">
    <property type="entry name" value="Cytokinesis_Signaling_Reg"/>
</dbReference>
<dbReference type="PANTHER" id="PTHR36419">
    <property type="entry name" value="ARRESTIN FAMILY PROTEIN 1"/>
    <property type="match status" value="1"/>
</dbReference>
<dbReference type="PANTHER" id="PTHR36419:SF1">
    <property type="entry name" value="RHO1 GEF LOCALIZING PROTEIN 1"/>
    <property type="match status" value="1"/>
</dbReference>
<keyword id="KW-1185">Reference proteome</keyword>